<comment type="function">
    <text evidence="1">Negative regulator of class I heat shock genes (grpE-dnaK-dnaJ and groELS operons). Prevents heat-shock induction of these operons.</text>
</comment>
<comment type="similarity">
    <text evidence="1">Belongs to the HrcA family.</text>
</comment>
<feature type="chain" id="PRO_0000182543" description="Heat-inducible transcription repressor hrcA">
    <location>
        <begin position="1"/>
        <end position="344"/>
    </location>
</feature>
<accession>P0DB66</accession>
<accession>Q8K623</accession>
<keyword id="KW-0678">Repressor</keyword>
<keyword id="KW-0346">Stress response</keyword>
<keyword id="KW-0804">Transcription</keyword>
<keyword id="KW-0805">Transcription regulation</keyword>
<name>HRCA_STRP3</name>
<evidence type="ECO:0000255" key="1">
    <source>
        <dbReference type="HAMAP-Rule" id="MF_00081"/>
    </source>
</evidence>
<sequence>MITQRQNDILNLIVELFTQTHEPVGSKALQRTIDSSSATIRNDMAKLEKLGLLEKAHTSSGRMPSPAGFKYFVEHSLRLDSIDEQDIYHVIKAFDFEAFKLEDMLQKASHILSEMTGYTSVILDVEPARQRLTGFDVVQLSNHDALAVMTLDESKPVTVQFAIPRNFLTRDLIAFKAIVEERLLDSSVIDIHYKLRTEIPQIVQKYFVTTDNVLQLFDYVFSELFLETVFVAGKVNSLTYSDLSTYQFLDNEQQVAISLRQSLKEGEMASVQVADSQEAALADVSVLTHKFLIPYRGFGLLSLIGPIDMDYRRSVSLVNIIGKVLAAKLGDYYRYLNSNHYEVH</sequence>
<protein>
    <recommendedName>
        <fullName>Heat-inducible transcription repressor hrcA</fullName>
    </recommendedName>
</protein>
<gene>
    <name evidence="1" type="primary">hrcA</name>
    <name type="ordered locus">SpyM3_1533</name>
</gene>
<organism>
    <name type="scientific">Streptococcus pyogenes serotype M3 (strain ATCC BAA-595 / MGAS315)</name>
    <dbReference type="NCBI Taxonomy" id="198466"/>
    <lineage>
        <taxon>Bacteria</taxon>
        <taxon>Bacillati</taxon>
        <taxon>Bacillota</taxon>
        <taxon>Bacilli</taxon>
        <taxon>Lactobacillales</taxon>
        <taxon>Streptococcaceae</taxon>
        <taxon>Streptococcus</taxon>
    </lineage>
</organism>
<reference key="1">
    <citation type="journal article" date="2002" name="Proc. Natl. Acad. Sci. U.S.A.">
        <title>Genome sequence of a serotype M3 strain of group A Streptococcus: phage-encoded toxins, the high-virulence phenotype, and clone emergence.</title>
        <authorList>
            <person name="Beres S.B."/>
            <person name="Sylva G.L."/>
            <person name="Barbian K.D."/>
            <person name="Lei B."/>
            <person name="Hoff J.S."/>
            <person name="Mammarella N.D."/>
            <person name="Liu M.-Y."/>
            <person name="Smoot J.C."/>
            <person name="Porcella S.F."/>
            <person name="Parkins L.D."/>
            <person name="Campbell D.S."/>
            <person name="Smith T.M."/>
            <person name="McCormick J.K."/>
            <person name="Leung D.Y.M."/>
            <person name="Schlievert P.M."/>
            <person name="Musser J.M."/>
        </authorList>
    </citation>
    <scope>NUCLEOTIDE SEQUENCE [LARGE SCALE GENOMIC DNA]</scope>
    <source>
        <strain>ATCC BAA-595 / MGAS315</strain>
    </source>
</reference>
<dbReference type="EMBL" id="AE014074">
    <property type="protein sequence ID" value="AAM80140.1"/>
    <property type="molecule type" value="Genomic_DNA"/>
</dbReference>
<dbReference type="RefSeq" id="WP_011054942.1">
    <property type="nucleotide sequence ID" value="NC_004070.1"/>
</dbReference>
<dbReference type="SMR" id="P0DB66"/>
<dbReference type="KEGG" id="spg:SpyM3_1533"/>
<dbReference type="HOGENOM" id="CLU_050019_1_0_9"/>
<dbReference type="Proteomes" id="UP000000564">
    <property type="component" value="Chromosome"/>
</dbReference>
<dbReference type="GO" id="GO:0003677">
    <property type="term" value="F:DNA binding"/>
    <property type="evidence" value="ECO:0007669"/>
    <property type="project" value="InterPro"/>
</dbReference>
<dbReference type="GO" id="GO:0045892">
    <property type="term" value="P:negative regulation of DNA-templated transcription"/>
    <property type="evidence" value="ECO:0007669"/>
    <property type="project" value="UniProtKB-UniRule"/>
</dbReference>
<dbReference type="Gene3D" id="3.30.450.40">
    <property type="match status" value="1"/>
</dbReference>
<dbReference type="Gene3D" id="3.30.390.60">
    <property type="entry name" value="Heat-inducible transcription repressor hrca homolog, domain 3"/>
    <property type="match status" value="1"/>
</dbReference>
<dbReference type="Gene3D" id="1.10.10.10">
    <property type="entry name" value="Winged helix-like DNA-binding domain superfamily/Winged helix DNA-binding domain"/>
    <property type="match status" value="1"/>
</dbReference>
<dbReference type="HAMAP" id="MF_00081">
    <property type="entry name" value="HrcA"/>
    <property type="match status" value="1"/>
</dbReference>
<dbReference type="InterPro" id="IPR029016">
    <property type="entry name" value="GAF-like_dom_sf"/>
</dbReference>
<dbReference type="InterPro" id="IPR002571">
    <property type="entry name" value="HrcA"/>
</dbReference>
<dbReference type="InterPro" id="IPR021153">
    <property type="entry name" value="HrcA_C"/>
</dbReference>
<dbReference type="InterPro" id="IPR036388">
    <property type="entry name" value="WH-like_DNA-bd_sf"/>
</dbReference>
<dbReference type="InterPro" id="IPR036390">
    <property type="entry name" value="WH_DNA-bd_sf"/>
</dbReference>
<dbReference type="InterPro" id="IPR005104">
    <property type="entry name" value="WHTH_HrcA_DNA-bd"/>
</dbReference>
<dbReference type="InterPro" id="IPR023120">
    <property type="entry name" value="WHTH_transcript_rep_HrcA_IDD"/>
</dbReference>
<dbReference type="NCBIfam" id="TIGR00331">
    <property type="entry name" value="hrcA"/>
    <property type="match status" value="1"/>
</dbReference>
<dbReference type="PANTHER" id="PTHR34824">
    <property type="entry name" value="HEAT-INDUCIBLE TRANSCRIPTION REPRESSOR HRCA"/>
    <property type="match status" value="1"/>
</dbReference>
<dbReference type="PANTHER" id="PTHR34824:SF1">
    <property type="entry name" value="HEAT-INDUCIBLE TRANSCRIPTION REPRESSOR HRCA"/>
    <property type="match status" value="1"/>
</dbReference>
<dbReference type="Pfam" id="PF01628">
    <property type="entry name" value="HrcA"/>
    <property type="match status" value="1"/>
</dbReference>
<dbReference type="Pfam" id="PF03444">
    <property type="entry name" value="HrcA_DNA-bdg"/>
    <property type="match status" value="1"/>
</dbReference>
<dbReference type="PIRSF" id="PIRSF005485">
    <property type="entry name" value="HrcA"/>
    <property type="match status" value="1"/>
</dbReference>
<dbReference type="SUPFAM" id="SSF55781">
    <property type="entry name" value="GAF domain-like"/>
    <property type="match status" value="1"/>
</dbReference>
<dbReference type="SUPFAM" id="SSF46785">
    <property type="entry name" value="Winged helix' DNA-binding domain"/>
    <property type="match status" value="1"/>
</dbReference>
<proteinExistence type="inferred from homology"/>